<feature type="chain" id="PRO_0000185599" description="Probable D-serine dehydratase">
    <location>
        <begin position="1"/>
        <end position="441"/>
    </location>
</feature>
<feature type="modified residue" description="N6-(pyridoxal phosphate)lysine" evidence="1">
    <location>
        <position position="117"/>
    </location>
</feature>
<protein>
    <recommendedName>
        <fullName evidence="1">Probable D-serine dehydratase</fullName>
        <ecNumber evidence="1">4.3.1.18</ecNumber>
    </recommendedName>
    <alternativeName>
        <fullName evidence="1">D-serine deaminase</fullName>
        <shortName evidence="1">DSD</shortName>
    </alternativeName>
</protein>
<keyword id="KW-0456">Lyase</keyword>
<keyword id="KW-0663">Pyridoxal phosphate</keyword>
<proteinExistence type="inferred from homology"/>
<reference key="1">
    <citation type="journal article" date="2004" name="Nucleic Acids Res.">
        <title>Unique features revealed by the genome sequence of Acinetobacter sp. ADP1, a versatile and naturally transformation competent bacterium.</title>
        <authorList>
            <person name="Barbe V."/>
            <person name="Vallenet D."/>
            <person name="Fonknechten N."/>
            <person name="Kreimeyer A."/>
            <person name="Oztas S."/>
            <person name="Labarre L."/>
            <person name="Cruveiller S."/>
            <person name="Robert C."/>
            <person name="Duprat S."/>
            <person name="Wincker P."/>
            <person name="Ornston L.N."/>
            <person name="Weissenbach J."/>
            <person name="Marliere P."/>
            <person name="Cohen G.N."/>
            <person name="Medigue C."/>
        </authorList>
    </citation>
    <scope>NUCLEOTIDE SEQUENCE [LARGE SCALE GENOMIC DNA]</scope>
    <source>
        <strain>ATCC 33305 / BD413 / ADP1</strain>
    </source>
</reference>
<sequence length="441" mass="48568">MTTLNIQAIQQDSLIKSLKNYEEIFWFQPEPTPIEQGLKRTSLTLADIQDAEARLTRFAPYLEKVFPELRSTQGKIESEIVSIPTMQHDCSKRFAIEPNGTWWLKKDSHLPISGSIKARGGIYEVLAHAEKLALKAGLVTLQDNYSQLDSDQARQFFSNYQIAVGSTGNLGLSIGIMSAKLGFRVSVHMSADARQWKKDKLRSLGVNVVEYASDYGVAVEQGRKAAESDPNCFFIDDENSTTLFLGYAVAGLRLKQQLIDQNIQVDAEHPLFVYLPCGVGGGPGGVSFGLKHALGEHVHCIFAEPTHSPCMLLGVYTGLHDQICVADIGLDNATAADGLAVGRASGFVGRAMQDLIDGYYTISDQHLFEFIRLMDQTQSIQLEPSAVAGVLGIYHVNTNKSYQQAYHLNAIQLKNATHLIWATGGGMVPPNEMQKYLKQCE</sequence>
<name>SDHD_ACIAD</name>
<dbReference type="EC" id="4.3.1.18" evidence="1"/>
<dbReference type="EMBL" id="CR543861">
    <property type="protein sequence ID" value="CAG67937.1"/>
    <property type="molecule type" value="Genomic_DNA"/>
</dbReference>
<dbReference type="RefSeq" id="WP_004921695.1">
    <property type="nucleotide sequence ID" value="NC_005966.1"/>
</dbReference>
<dbReference type="SMR" id="Q6FDC1"/>
<dbReference type="STRING" id="202950.GCA_001485005_01316"/>
<dbReference type="GeneID" id="45233491"/>
<dbReference type="KEGG" id="aci:ACIAD1048"/>
<dbReference type="eggNOG" id="COG3048">
    <property type="taxonomic scope" value="Bacteria"/>
</dbReference>
<dbReference type="HOGENOM" id="CLU_035707_0_0_6"/>
<dbReference type="OrthoDB" id="9780546at2"/>
<dbReference type="BioCyc" id="ASP62977:ACIAD_RS04830-MONOMER"/>
<dbReference type="Proteomes" id="UP000000430">
    <property type="component" value="Chromosome"/>
</dbReference>
<dbReference type="GO" id="GO:0008721">
    <property type="term" value="F:D-serine ammonia-lyase activity"/>
    <property type="evidence" value="ECO:0007669"/>
    <property type="project" value="UniProtKB-EC"/>
</dbReference>
<dbReference type="GO" id="GO:0016836">
    <property type="term" value="F:hydro-lyase activity"/>
    <property type="evidence" value="ECO:0007669"/>
    <property type="project" value="UniProtKB-UniRule"/>
</dbReference>
<dbReference type="GO" id="GO:0030170">
    <property type="term" value="F:pyridoxal phosphate binding"/>
    <property type="evidence" value="ECO:0007669"/>
    <property type="project" value="InterPro"/>
</dbReference>
<dbReference type="GO" id="GO:0036088">
    <property type="term" value="P:D-serine catabolic process"/>
    <property type="evidence" value="ECO:0007669"/>
    <property type="project" value="TreeGrafter"/>
</dbReference>
<dbReference type="GO" id="GO:0009097">
    <property type="term" value="P:isoleucine biosynthetic process"/>
    <property type="evidence" value="ECO:0007669"/>
    <property type="project" value="TreeGrafter"/>
</dbReference>
<dbReference type="FunFam" id="3.40.50.1100:FF:000018">
    <property type="entry name" value="D-serine dehydratase"/>
    <property type="match status" value="1"/>
</dbReference>
<dbReference type="Gene3D" id="3.40.50.1100">
    <property type="match status" value="2"/>
</dbReference>
<dbReference type="HAMAP" id="MF_01030">
    <property type="entry name" value="D_Ser_dehydrat"/>
    <property type="match status" value="1"/>
</dbReference>
<dbReference type="InterPro" id="IPR011780">
    <property type="entry name" value="D_Ser_am_lyase"/>
</dbReference>
<dbReference type="InterPro" id="IPR050147">
    <property type="entry name" value="Ser/Thr_Dehydratase"/>
</dbReference>
<dbReference type="InterPro" id="IPR000634">
    <property type="entry name" value="Ser/Thr_deHydtase_PyrdxlP-BS"/>
</dbReference>
<dbReference type="InterPro" id="IPR001926">
    <property type="entry name" value="TrpB-like_PALP"/>
</dbReference>
<dbReference type="InterPro" id="IPR036052">
    <property type="entry name" value="TrpB-like_PALP_sf"/>
</dbReference>
<dbReference type="NCBIfam" id="TIGR02035">
    <property type="entry name" value="D_Ser_am_lyase"/>
    <property type="match status" value="1"/>
</dbReference>
<dbReference type="NCBIfam" id="NF002823">
    <property type="entry name" value="PRK02991.1"/>
    <property type="match status" value="1"/>
</dbReference>
<dbReference type="PANTHER" id="PTHR48078:SF9">
    <property type="entry name" value="D-SERINE DEHYDRATASE"/>
    <property type="match status" value="1"/>
</dbReference>
<dbReference type="PANTHER" id="PTHR48078">
    <property type="entry name" value="THREONINE DEHYDRATASE, MITOCHONDRIAL-RELATED"/>
    <property type="match status" value="1"/>
</dbReference>
<dbReference type="Pfam" id="PF00291">
    <property type="entry name" value="PALP"/>
    <property type="match status" value="1"/>
</dbReference>
<dbReference type="SUPFAM" id="SSF53686">
    <property type="entry name" value="Tryptophan synthase beta subunit-like PLP-dependent enzymes"/>
    <property type="match status" value="1"/>
</dbReference>
<dbReference type="PROSITE" id="PS00165">
    <property type="entry name" value="DEHYDRATASE_SER_THR"/>
    <property type="match status" value="1"/>
</dbReference>
<comment type="catalytic activity">
    <reaction evidence="1">
        <text>D-serine = pyruvate + NH4(+)</text>
        <dbReference type="Rhea" id="RHEA:13977"/>
        <dbReference type="ChEBI" id="CHEBI:15361"/>
        <dbReference type="ChEBI" id="CHEBI:28938"/>
        <dbReference type="ChEBI" id="CHEBI:35247"/>
        <dbReference type="EC" id="4.3.1.18"/>
    </reaction>
</comment>
<comment type="cofactor">
    <cofactor evidence="1">
        <name>pyridoxal 5'-phosphate</name>
        <dbReference type="ChEBI" id="CHEBI:597326"/>
    </cofactor>
</comment>
<comment type="similarity">
    <text evidence="1">Belongs to the serine/threonine dehydratase family. DsdA subfamily.</text>
</comment>
<evidence type="ECO:0000255" key="1">
    <source>
        <dbReference type="HAMAP-Rule" id="MF_01030"/>
    </source>
</evidence>
<organism>
    <name type="scientific">Acinetobacter baylyi (strain ATCC 33305 / BD413 / ADP1)</name>
    <dbReference type="NCBI Taxonomy" id="62977"/>
    <lineage>
        <taxon>Bacteria</taxon>
        <taxon>Pseudomonadati</taxon>
        <taxon>Pseudomonadota</taxon>
        <taxon>Gammaproteobacteria</taxon>
        <taxon>Moraxellales</taxon>
        <taxon>Moraxellaceae</taxon>
        <taxon>Acinetobacter</taxon>
    </lineage>
</organism>
<gene>
    <name evidence="1" type="primary">dsdA</name>
    <name type="ordered locus">ACIAD1048</name>
</gene>
<accession>Q6FDC1</accession>